<proteinExistence type="inferred from homology"/>
<keyword id="KW-0028">Amino-acid biosynthesis</keyword>
<keyword id="KW-0057">Aromatic amino acid biosynthesis</keyword>
<keyword id="KW-0170">Cobalt</keyword>
<keyword id="KW-0963">Cytoplasm</keyword>
<keyword id="KW-0456">Lyase</keyword>
<keyword id="KW-0479">Metal-binding</keyword>
<keyword id="KW-0520">NAD</keyword>
<keyword id="KW-0547">Nucleotide-binding</keyword>
<keyword id="KW-1185">Reference proteome</keyword>
<keyword id="KW-0862">Zinc</keyword>
<accession>Q7VRN3</accession>
<dbReference type="EC" id="4.2.3.4" evidence="1"/>
<dbReference type="EMBL" id="BX248583">
    <property type="protein sequence ID" value="CAD83253.1"/>
    <property type="molecule type" value="Genomic_DNA"/>
</dbReference>
<dbReference type="SMR" id="Q7VRN3"/>
<dbReference type="STRING" id="203907.Bfl571"/>
<dbReference type="KEGG" id="bfl:Bfl571"/>
<dbReference type="eggNOG" id="COG0337">
    <property type="taxonomic scope" value="Bacteria"/>
</dbReference>
<dbReference type="HOGENOM" id="CLU_001201_0_2_6"/>
<dbReference type="OrthoDB" id="9806583at2"/>
<dbReference type="UniPathway" id="UPA00053">
    <property type="reaction ID" value="UER00085"/>
</dbReference>
<dbReference type="Proteomes" id="UP000002192">
    <property type="component" value="Chromosome"/>
</dbReference>
<dbReference type="GO" id="GO:0005737">
    <property type="term" value="C:cytoplasm"/>
    <property type="evidence" value="ECO:0007669"/>
    <property type="project" value="UniProtKB-SubCell"/>
</dbReference>
<dbReference type="GO" id="GO:0003856">
    <property type="term" value="F:3-dehydroquinate synthase activity"/>
    <property type="evidence" value="ECO:0007669"/>
    <property type="project" value="UniProtKB-UniRule"/>
</dbReference>
<dbReference type="GO" id="GO:0046872">
    <property type="term" value="F:metal ion binding"/>
    <property type="evidence" value="ECO:0007669"/>
    <property type="project" value="UniProtKB-KW"/>
</dbReference>
<dbReference type="GO" id="GO:0000166">
    <property type="term" value="F:nucleotide binding"/>
    <property type="evidence" value="ECO:0007669"/>
    <property type="project" value="UniProtKB-KW"/>
</dbReference>
<dbReference type="GO" id="GO:0008652">
    <property type="term" value="P:amino acid biosynthetic process"/>
    <property type="evidence" value="ECO:0007669"/>
    <property type="project" value="UniProtKB-KW"/>
</dbReference>
<dbReference type="GO" id="GO:0009073">
    <property type="term" value="P:aromatic amino acid family biosynthetic process"/>
    <property type="evidence" value="ECO:0007669"/>
    <property type="project" value="UniProtKB-KW"/>
</dbReference>
<dbReference type="GO" id="GO:0009423">
    <property type="term" value="P:chorismate biosynthetic process"/>
    <property type="evidence" value="ECO:0007669"/>
    <property type="project" value="UniProtKB-UniRule"/>
</dbReference>
<dbReference type="CDD" id="cd08195">
    <property type="entry name" value="DHQS"/>
    <property type="match status" value="1"/>
</dbReference>
<dbReference type="FunFam" id="3.40.50.1970:FF:000001">
    <property type="entry name" value="3-dehydroquinate synthase"/>
    <property type="match status" value="1"/>
</dbReference>
<dbReference type="Gene3D" id="3.40.50.1970">
    <property type="match status" value="1"/>
</dbReference>
<dbReference type="Gene3D" id="1.20.1090.10">
    <property type="entry name" value="Dehydroquinate synthase-like - alpha domain"/>
    <property type="match status" value="1"/>
</dbReference>
<dbReference type="HAMAP" id="MF_00110">
    <property type="entry name" value="DHQ_synthase"/>
    <property type="match status" value="1"/>
</dbReference>
<dbReference type="InterPro" id="IPR050071">
    <property type="entry name" value="Dehydroquinate_synthase"/>
</dbReference>
<dbReference type="InterPro" id="IPR016037">
    <property type="entry name" value="DHQ_synth_AroB"/>
</dbReference>
<dbReference type="InterPro" id="IPR030963">
    <property type="entry name" value="DHQ_synth_fam"/>
</dbReference>
<dbReference type="InterPro" id="IPR030960">
    <property type="entry name" value="DHQS/DOIS_N"/>
</dbReference>
<dbReference type="InterPro" id="IPR056179">
    <property type="entry name" value="DHQS_C"/>
</dbReference>
<dbReference type="NCBIfam" id="TIGR01357">
    <property type="entry name" value="aroB"/>
    <property type="match status" value="1"/>
</dbReference>
<dbReference type="PANTHER" id="PTHR43622">
    <property type="entry name" value="3-DEHYDROQUINATE SYNTHASE"/>
    <property type="match status" value="1"/>
</dbReference>
<dbReference type="PANTHER" id="PTHR43622:SF7">
    <property type="entry name" value="3-DEHYDROQUINATE SYNTHASE, CHLOROPLASTIC"/>
    <property type="match status" value="1"/>
</dbReference>
<dbReference type="Pfam" id="PF01761">
    <property type="entry name" value="DHQ_synthase"/>
    <property type="match status" value="1"/>
</dbReference>
<dbReference type="Pfam" id="PF24621">
    <property type="entry name" value="DHQS_C"/>
    <property type="match status" value="1"/>
</dbReference>
<dbReference type="PIRSF" id="PIRSF001455">
    <property type="entry name" value="DHQ_synth"/>
    <property type="match status" value="1"/>
</dbReference>
<dbReference type="SUPFAM" id="SSF56796">
    <property type="entry name" value="Dehydroquinate synthase-like"/>
    <property type="match status" value="1"/>
</dbReference>
<organism>
    <name type="scientific">Blochmanniella floridana</name>
    <dbReference type="NCBI Taxonomy" id="203907"/>
    <lineage>
        <taxon>Bacteria</taxon>
        <taxon>Pseudomonadati</taxon>
        <taxon>Pseudomonadota</taxon>
        <taxon>Gammaproteobacteria</taxon>
        <taxon>Enterobacterales</taxon>
        <taxon>Enterobacteriaceae</taxon>
        <taxon>ant endosymbionts</taxon>
        <taxon>Candidatus Blochmanniella</taxon>
    </lineage>
</organism>
<evidence type="ECO:0000255" key="1">
    <source>
        <dbReference type="HAMAP-Rule" id="MF_00110"/>
    </source>
</evidence>
<sequence>MIKRIIVNVKTGSYPIIIGYGLLNKDFMSYWTIKNGDLVVIITNDRVAPIYLNRLYNSFNACEIVTDQCILPDGEQNKSLSMLNKILTQLLSKNYDRDTILVALGGGVIGDLTGFAASVYQRGIRFIQVPTTLLAQVDASIGGKTGVNHVFGKNMIGSFHQPISVMVDLDCLCTLSEKEFRSGLSEIIKYAVALDSAFFNWLENNLDYLLMLNPQSLMYCVYRCCELKRSIVIMDEFDQGIRSVLNLGHTYGHAIESYLGYSQWSHGEAIAAGLMMAVSTALHIGGLISFHDAIRIKLLLKRANLPICGPEEMKPQDYIKYMIRDKKSRLGRINLVLPKSIGKTQVFVNVNTDVILNAIENIDI</sequence>
<reference key="1">
    <citation type="journal article" date="2003" name="Proc. Natl. Acad. Sci. U.S.A.">
        <title>The genome sequence of Blochmannia floridanus: comparative analysis of reduced genomes.</title>
        <authorList>
            <person name="Gil R."/>
            <person name="Silva F.J."/>
            <person name="Zientz E."/>
            <person name="Delmotte F."/>
            <person name="Gonzalez-Candelas F."/>
            <person name="Latorre A."/>
            <person name="Rausell C."/>
            <person name="Kamerbeek J."/>
            <person name="Gadau J."/>
            <person name="Hoelldobler B."/>
            <person name="van Ham R.C.H.J."/>
            <person name="Gross R."/>
            <person name="Moya A."/>
        </authorList>
    </citation>
    <scope>NUCLEOTIDE SEQUENCE [LARGE SCALE GENOMIC DNA]</scope>
</reference>
<name>AROB_BLOFL</name>
<gene>
    <name evidence="1" type="primary">aroB</name>
    <name type="ordered locus">Bfl571</name>
</gene>
<feature type="chain" id="PRO_0000140722" description="3-dehydroquinate synthase">
    <location>
        <begin position="1"/>
        <end position="364"/>
    </location>
</feature>
<feature type="binding site" evidence="1">
    <location>
        <begin position="73"/>
        <end position="78"/>
    </location>
    <ligand>
        <name>NAD(+)</name>
        <dbReference type="ChEBI" id="CHEBI:57540"/>
    </ligand>
</feature>
<feature type="binding site" evidence="1">
    <location>
        <begin position="107"/>
        <end position="111"/>
    </location>
    <ligand>
        <name>NAD(+)</name>
        <dbReference type="ChEBI" id="CHEBI:57540"/>
    </ligand>
</feature>
<feature type="binding site" evidence="1">
    <location>
        <begin position="131"/>
        <end position="132"/>
    </location>
    <ligand>
        <name>NAD(+)</name>
        <dbReference type="ChEBI" id="CHEBI:57540"/>
    </ligand>
</feature>
<feature type="binding site" evidence="1">
    <location>
        <position position="144"/>
    </location>
    <ligand>
        <name>NAD(+)</name>
        <dbReference type="ChEBI" id="CHEBI:57540"/>
    </ligand>
</feature>
<feature type="binding site" evidence="1">
    <location>
        <position position="153"/>
    </location>
    <ligand>
        <name>NAD(+)</name>
        <dbReference type="ChEBI" id="CHEBI:57540"/>
    </ligand>
</feature>
<feature type="binding site" evidence="1">
    <location>
        <begin position="171"/>
        <end position="174"/>
    </location>
    <ligand>
        <name>NAD(+)</name>
        <dbReference type="ChEBI" id="CHEBI:57540"/>
    </ligand>
</feature>
<feature type="binding site" evidence="1">
    <location>
        <position position="186"/>
    </location>
    <ligand>
        <name>Zn(2+)</name>
        <dbReference type="ChEBI" id="CHEBI:29105"/>
    </ligand>
</feature>
<feature type="binding site" evidence="1">
    <location>
        <position position="249"/>
    </location>
    <ligand>
        <name>Zn(2+)</name>
        <dbReference type="ChEBI" id="CHEBI:29105"/>
    </ligand>
</feature>
<feature type="binding site" evidence="1">
    <location>
        <position position="266"/>
    </location>
    <ligand>
        <name>Zn(2+)</name>
        <dbReference type="ChEBI" id="CHEBI:29105"/>
    </ligand>
</feature>
<comment type="function">
    <text evidence="1">Catalyzes the conversion of 3-deoxy-D-arabino-heptulosonate 7-phosphate (DAHP) to dehydroquinate (DHQ).</text>
</comment>
<comment type="catalytic activity">
    <reaction evidence="1">
        <text>7-phospho-2-dehydro-3-deoxy-D-arabino-heptonate = 3-dehydroquinate + phosphate</text>
        <dbReference type="Rhea" id="RHEA:21968"/>
        <dbReference type="ChEBI" id="CHEBI:32364"/>
        <dbReference type="ChEBI" id="CHEBI:43474"/>
        <dbReference type="ChEBI" id="CHEBI:58394"/>
        <dbReference type="EC" id="4.2.3.4"/>
    </reaction>
</comment>
<comment type="cofactor">
    <cofactor evidence="1">
        <name>NAD(+)</name>
        <dbReference type="ChEBI" id="CHEBI:57540"/>
    </cofactor>
</comment>
<comment type="cofactor">
    <cofactor evidence="1">
        <name>Co(2+)</name>
        <dbReference type="ChEBI" id="CHEBI:48828"/>
    </cofactor>
    <cofactor evidence="1">
        <name>Zn(2+)</name>
        <dbReference type="ChEBI" id="CHEBI:29105"/>
    </cofactor>
    <text evidence="1">Binds 1 divalent metal cation per subunit. Can use either Co(2+) or Zn(2+).</text>
</comment>
<comment type="pathway">
    <text evidence="1">Metabolic intermediate biosynthesis; chorismate biosynthesis; chorismate from D-erythrose 4-phosphate and phosphoenolpyruvate: step 2/7.</text>
</comment>
<comment type="subcellular location">
    <subcellularLocation>
        <location evidence="1">Cytoplasm</location>
    </subcellularLocation>
</comment>
<comment type="similarity">
    <text evidence="1">Belongs to the sugar phosphate cyclases superfamily. Dehydroquinate synthase family.</text>
</comment>
<protein>
    <recommendedName>
        <fullName evidence="1">3-dehydroquinate synthase</fullName>
        <shortName evidence="1">DHQS</shortName>
        <ecNumber evidence="1">4.2.3.4</ecNumber>
    </recommendedName>
</protein>